<keyword id="KW-1185">Reference proteome</keyword>
<keyword id="KW-0687">Ribonucleoprotein</keyword>
<keyword id="KW-0689">Ribosomal protein</keyword>
<keyword id="KW-0694">RNA-binding</keyword>
<keyword id="KW-0699">rRNA-binding</keyword>
<comment type="function">
    <text evidence="1">Located on the platform of the 30S subunit, it bridges several disparate RNA helices of the 16S rRNA. Forms part of the Shine-Dalgarno cleft in the 70S ribosome.</text>
</comment>
<comment type="subunit">
    <text evidence="1">Part of the 30S ribosomal subunit. Interacts with proteins S7 and S18. Binds to IF-3.</text>
</comment>
<comment type="similarity">
    <text evidence="1">Belongs to the universal ribosomal protein uS11 family.</text>
</comment>
<organism>
    <name type="scientific">Exiguobacterium sibiricum (strain DSM 17290 / CCUG 55495 / CIP 109462 / JCM 13490 / 255-15)</name>
    <dbReference type="NCBI Taxonomy" id="262543"/>
    <lineage>
        <taxon>Bacteria</taxon>
        <taxon>Bacillati</taxon>
        <taxon>Bacillota</taxon>
        <taxon>Bacilli</taxon>
        <taxon>Bacillales</taxon>
        <taxon>Bacillales Family XII. Incertae Sedis</taxon>
        <taxon>Exiguobacterium</taxon>
    </lineage>
</organism>
<dbReference type="EMBL" id="CP001022">
    <property type="protein sequence ID" value="ACB59609.1"/>
    <property type="molecule type" value="Genomic_DNA"/>
</dbReference>
<dbReference type="RefSeq" id="WP_012369034.1">
    <property type="nucleotide sequence ID" value="NC_010556.1"/>
</dbReference>
<dbReference type="SMR" id="B1YGX6"/>
<dbReference type="STRING" id="262543.Exig_0122"/>
<dbReference type="KEGG" id="esi:Exig_0122"/>
<dbReference type="eggNOG" id="COG0100">
    <property type="taxonomic scope" value="Bacteria"/>
</dbReference>
<dbReference type="HOGENOM" id="CLU_072439_5_0_9"/>
<dbReference type="OrthoDB" id="9806415at2"/>
<dbReference type="Proteomes" id="UP000001681">
    <property type="component" value="Chromosome"/>
</dbReference>
<dbReference type="GO" id="GO:1990904">
    <property type="term" value="C:ribonucleoprotein complex"/>
    <property type="evidence" value="ECO:0007669"/>
    <property type="project" value="UniProtKB-KW"/>
</dbReference>
<dbReference type="GO" id="GO:0005840">
    <property type="term" value="C:ribosome"/>
    <property type="evidence" value="ECO:0007669"/>
    <property type="project" value="UniProtKB-KW"/>
</dbReference>
<dbReference type="GO" id="GO:0019843">
    <property type="term" value="F:rRNA binding"/>
    <property type="evidence" value="ECO:0007669"/>
    <property type="project" value="UniProtKB-UniRule"/>
</dbReference>
<dbReference type="GO" id="GO:0003735">
    <property type="term" value="F:structural constituent of ribosome"/>
    <property type="evidence" value="ECO:0007669"/>
    <property type="project" value="InterPro"/>
</dbReference>
<dbReference type="GO" id="GO:0006412">
    <property type="term" value="P:translation"/>
    <property type="evidence" value="ECO:0007669"/>
    <property type="project" value="UniProtKB-UniRule"/>
</dbReference>
<dbReference type="FunFam" id="3.30.420.80:FF:000001">
    <property type="entry name" value="30S ribosomal protein S11"/>
    <property type="match status" value="1"/>
</dbReference>
<dbReference type="Gene3D" id="3.30.420.80">
    <property type="entry name" value="Ribosomal protein S11"/>
    <property type="match status" value="1"/>
</dbReference>
<dbReference type="HAMAP" id="MF_01310">
    <property type="entry name" value="Ribosomal_uS11"/>
    <property type="match status" value="1"/>
</dbReference>
<dbReference type="InterPro" id="IPR001971">
    <property type="entry name" value="Ribosomal_uS11"/>
</dbReference>
<dbReference type="InterPro" id="IPR019981">
    <property type="entry name" value="Ribosomal_uS11_bac-type"/>
</dbReference>
<dbReference type="InterPro" id="IPR018102">
    <property type="entry name" value="Ribosomal_uS11_CS"/>
</dbReference>
<dbReference type="InterPro" id="IPR036967">
    <property type="entry name" value="Ribosomal_uS11_sf"/>
</dbReference>
<dbReference type="NCBIfam" id="NF003698">
    <property type="entry name" value="PRK05309.1"/>
    <property type="match status" value="1"/>
</dbReference>
<dbReference type="NCBIfam" id="TIGR03632">
    <property type="entry name" value="uS11_bact"/>
    <property type="match status" value="1"/>
</dbReference>
<dbReference type="PANTHER" id="PTHR11759">
    <property type="entry name" value="40S RIBOSOMAL PROTEIN S14/30S RIBOSOMAL PROTEIN S11"/>
    <property type="match status" value="1"/>
</dbReference>
<dbReference type="Pfam" id="PF00411">
    <property type="entry name" value="Ribosomal_S11"/>
    <property type="match status" value="1"/>
</dbReference>
<dbReference type="PIRSF" id="PIRSF002131">
    <property type="entry name" value="Ribosomal_S11"/>
    <property type="match status" value="1"/>
</dbReference>
<dbReference type="SUPFAM" id="SSF53137">
    <property type="entry name" value="Translational machinery components"/>
    <property type="match status" value="1"/>
</dbReference>
<dbReference type="PROSITE" id="PS00054">
    <property type="entry name" value="RIBOSOMAL_S11"/>
    <property type="match status" value="1"/>
</dbReference>
<sequence length="131" mass="14167">MAKRKQNVRSKRKVKKNIESGIVHIRSTFNNTIVTITDMQGNAISWATAGNMGFKGSRKSTPFAAQLASETAAKTAMDNGMRTVEVNVKGPGAGREAAIRALQAIGLEVTAIRDVTPVPHNGCRPPKRRRV</sequence>
<protein>
    <recommendedName>
        <fullName evidence="1">Small ribosomal subunit protein uS11</fullName>
    </recommendedName>
    <alternativeName>
        <fullName evidence="2">30S ribosomal protein S11</fullName>
    </alternativeName>
</protein>
<name>RS11_EXIS2</name>
<evidence type="ECO:0000255" key="1">
    <source>
        <dbReference type="HAMAP-Rule" id="MF_01310"/>
    </source>
</evidence>
<evidence type="ECO:0000305" key="2"/>
<accession>B1YGX6</accession>
<gene>
    <name evidence="1" type="primary">rpsK</name>
    <name type="ordered locus">Exig_0122</name>
</gene>
<reference key="1">
    <citation type="submission" date="2008-04" db="EMBL/GenBank/DDBJ databases">
        <title>Complete sequence of chromosome of Exiguobacterium sibiricum 255-15.</title>
        <authorList>
            <consortium name="US DOE Joint Genome Institute"/>
            <person name="Copeland A."/>
            <person name="Lucas S."/>
            <person name="Lapidus A."/>
            <person name="Glavina del Rio T."/>
            <person name="Dalin E."/>
            <person name="Tice H."/>
            <person name="Bruce D."/>
            <person name="Goodwin L."/>
            <person name="Pitluck S."/>
            <person name="Kiss H."/>
            <person name="Chertkov O."/>
            <person name="Monk C."/>
            <person name="Brettin T."/>
            <person name="Detter J.C."/>
            <person name="Han C."/>
            <person name="Kuske C.R."/>
            <person name="Schmutz J."/>
            <person name="Larimer F."/>
            <person name="Land M."/>
            <person name="Hauser L."/>
            <person name="Kyrpides N."/>
            <person name="Mikhailova N."/>
            <person name="Vishnivetskaya T."/>
            <person name="Rodrigues D.F."/>
            <person name="Gilichinsky D."/>
            <person name="Tiedje J."/>
            <person name="Richardson P."/>
        </authorList>
    </citation>
    <scope>NUCLEOTIDE SEQUENCE [LARGE SCALE GENOMIC DNA]</scope>
    <source>
        <strain>DSM 17290 / CCUG 55495 / CIP 109462 / JCM 13490 / 255-15</strain>
    </source>
</reference>
<feature type="chain" id="PRO_1000214362" description="Small ribosomal subunit protein uS11">
    <location>
        <begin position="1"/>
        <end position="131"/>
    </location>
</feature>
<proteinExistence type="inferred from homology"/>